<name>MIC10_MOUSE</name>
<feature type="initiator methionine" description="Removed" evidence="1">
    <location>
        <position position="1"/>
    </location>
</feature>
<feature type="chain" id="PRO_0000221635" description="MICOS complex subunit Mic10">
    <location>
        <begin position="2"/>
        <end position="76"/>
    </location>
</feature>
<feature type="transmembrane region" description="Helical" evidence="2">
    <location>
        <begin position="17"/>
        <end position="36"/>
    </location>
</feature>
<feature type="topological domain" description="Mitochondrial intermembrane" evidence="2">
    <location>
        <begin position="37"/>
        <end position="76"/>
    </location>
</feature>
<feature type="modified residue" description="N-acetylserine" evidence="1">
    <location>
        <position position="2"/>
    </location>
</feature>
<protein>
    <recommendedName>
        <fullName evidence="3">MICOS complex subunit Mic10</fullName>
    </recommendedName>
    <alternativeName>
        <fullName>Mitochondrial inner membrane organizing system protein 1</fullName>
    </alternativeName>
</protein>
<organism>
    <name type="scientific">Mus musculus</name>
    <name type="common">Mouse</name>
    <dbReference type="NCBI Taxonomy" id="10090"/>
    <lineage>
        <taxon>Eukaryota</taxon>
        <taxon>Metazoa</taxon>
        <taxon>Chordata</taxon>
        <taxon>Craniata</taxon>
        <taxon>Vertebrata</taxon>
        <taxon>Euteleostomi</taxon>
        <taxon>Mammalia</taxon>
        <taxon>Eutheria</taxon>
        <taxon>Euarchontoglires</taxon>
        <taxon>Glires</taxon>
        <taxon>Rodentia</taxon>
        <taxon>Myomorpha</taxon>
        <taxon>Muroidea</taxon>
        <taxon>Muridae</taxon>
        <taxon>Murinae</taxon>
        <taxon>Mus</taxon>
        <taxon>Mus</taxon>
    </lineage>
</organism>
<reference key="1">
    <citation type="journal article" date="2005" name="Science">
        <title>The transcriptional landscape of the mammalian genome.</title>
        <authorList>
            <person name="Carninci P."/>
            <person name="Kasukawa T."/>
            <person name="Katayama S."/>
            <person name="Gough J."/>
            <person name="Frith M.C."/>
            <person name="Maeda N."/>
            <person name="Oyama R."/>
            <person name="Ravasi T."/>
            <person name="Lenhard B."/>
            <person name="Wells C."/>
            <person name="Kodzius R."/>
            <person name="Shimokawa K."/>
            <person name="Bajic V.B."/>
            <person name="Brenner S.E."/>
            <person name="Batalov S."/>
            <person name="Forrest A.R."/>
            <person name="Zavolan M."/>
            <person name="Davis M.J."/>
            <person name="Wilming L.G."/>
            <person name="Aidinis V."/>
            <person name="Allen J.E."/>
            <person name="Ambesi-Impiombato A."/>
            <person name="Apweiler R."/>
            <person name="Aturaliya R.N."/>
            <person name="Bailey T.L."/>
            <person name="Bansal M."/>
            <person name="Baxter L."/>
            <person name="Beisel K.W."/>
            <person name="Bersano T."/>
            <person name="Bono H."/>
            <person name="Chalk A.M."/>
            <person name="Chiu K.P."/>
            <person name="Choudhary V."/>
            <person name="Christoffels A."/>
            <person name="Clutterbuck D.R."/>
            <person name="Crowe M.L."/>
            <person name="Dalla E."/>
            <person name="Dalrymple B.P."/>
            <person name="de Bono B."/>
            <person name="Della Gatta G."/>
            <person name="di Bernardo D."/>
            <person name="Down T."/>
            <person name="Engstrom P."/>
            <person name="Fagiolini M."/>
            <person name="Faulkner G."/>
            <person name="Fletcher C.F."/>
            <person name="Fukushima T."/>
            <person name="Furuno M."/>
            <person name="Futaki S."/>
            <person name="Gariboldi M."/>
            <person name="Georgii-Hemming P."/>
            <person name="Gingeras T.R."/>
            <person name="Gojobori T."/>
            <person name="Green R.E."/>
            <person name="Gustincich S."/>
            <person name="Harbers M."/>
            <person name="Hayashi Y."/>
            <person name="Hensch T.K."/>
            <person name="Hirokawa N."/>
            <person name="Hill D."/>
            <person name="Huminiecki L."/>
            <person name="Iacono M."/>
            <person name="Ikeo K."/>
            <person name="Iwama A."/>
            <person name="Ishikawa T."/>
            <person name="Jakt M."/>
            <person name="Kanapin A."/>
            <person name="Katoh M."/>
            <person name="Kawasawa Y."/>
            <person name="Kelso J."/>
            <person name="Kitamura H."/>
            <person name="Kitano H."/>
            <person name="Kollias G."/>
            <person name="Krishnan S.P."/>
            <person name="Kruger A."/>
            <person name="Kummerfeld S.K."/>
            <person name="Kurochkin I.V."/>
            <person name="Lareau L.F."/>
            <person name="Lazarevic D."/>
            <person name="Lipovich L."/>
            <person name="Liu J."/>
            <person name="Liuni S."/>
            <person name="McWilliam S."/>
            <person name="Madan Babu M."/>
            <person name="Madera M."/>
            <person name="Marchionni L."/>
            <person name="Matsuda H."/>
            <person name="Matsuzawa S."/>
            <person name="Miki H."/>
            <person name="Mignone F."/>
            <person name="Miyake S."/>
            <person name="Morris K."/>
            <person name="Mottagui-Tabar S."/>
            <person name="Mulder N."/>
            <person name="Nakano N."/>
            <person name="Nakauchi H."/>
            <person name="Ng P."/>
            <person name="Nilsson R."/>
            <person name="Nishiguchi S."/>
            <person name="Nishikawa S."/>
            <person name="Nori F."/>
            <person name="Ohara O."/>
            <person name="Okazaki Y."/>
            <person name="Orlando V."/>
            <person name="Pang K.C."/>
            <person name="Pavan W.J."/>
            <person name="Pavesi G."/>
            <person name="Pesole G."/>
            <person name="Petrovsky N."/>
            <person name="Piazza S."/>
            <person name="Reed J."/>
            <person name="Reid J.F."/>
            <person name="Ring B.Z."/>
            <person name="Ringwald M."/>
            <person name="Rost B."/>
            <person name="Ruan Y."/>
            <person name="Salzberg S.L."/>
            <person name="Sandelin A."/>
            <person name="Schneider C."/>
            <person name="Schoenbach C."/>
            <person name="Sekiguchi K."/>
            <person name="Semple C.A."/>
            <person name="Seno S."/>
            <person name="Sessa L."/>
            <person name="Sheng Y."/>
            <person name="Shibata Y."/>
            <person name="Shimada H."/>
            <person name="Shimada K."/>
            <person name="Silva D."/>
            <person name="Sinclair B."/>
            <person name="Sperling S."/>
            <person name="Stupka E."/>
            <person name="Sugiura K."/>
            <person name="Sultana R."/>
            <person name="Takenaka Y."/>
            <person name="Taki K."/>
            <person name="Tammoja K."/>
            <person name="Tan S.L."/>
            <person name="Tang S."/>
            <person name="Taylor M.S."/>
            <person name="Tegner J."/>
            <person name="Teichmann S.A."/>
            <person name="Ueda H.R."/>
            <person name="van Nimwegen E."/>
            <person name="Verardo R."/>
            <person name="Wei C.L."/>
            <person name="Yagi K."/>
            <person name="Yamanishi H."/>
            <person name="Zabarovsky E."/>
            <person name="Zhu S."/>
            <person name="Zimmer A."/>
            <person name="Hide W."/>
            <person name="Bult C."/>
            <person name="Grimmond S.M."/>
            <person name="Teasdale R.D."/>
            <person name="Liu E.T."/>
            <person name="Brusic V."/>
            <person name="Quackenbush J."/>
            <person name="Wahlestedt C."/>
            <person name="Mattick J.S."/>
            <person name="Hume D.A."/>
            <person name="Kai C."/>
            <person name="Sasaki D."/>
            <person name="Tomaru Y."/>
            <person name="Fukuda S."/>
            <person name="Kanamori-Katayama M."/>
            <person name="Suzuki M."/>
            <person name="Aoki J."/>
            <person name="Arakawa T."/>
            <person name="Iida J."/>
            <person name="Imamura K."/>
            <person name="Itoh M."/>
            <person name="Kato T."/>
            <person name="Kawaji H."/>
            <person name="Kawagashira N."/>
            <person name="Kawashima T."/>
            <person name="Kojima M."/>
            <person name="Kondo S."/>
            <person name="Konno H."/>
            <person name="Nakano K."/>
            <person name="Ninomiya N."/>
            <person name="Nishio T."/>
            <person name="Okada M."/>
            <person name="Plessy C."/>
            <person name="Shibata K."/>
            <person name="Shiraki T."/>
            <person name="Suzuki S."/>
            <person name="Tagami M."/>
            <person name="Waki K."/>
            <person name="Watahiki A."/>
            <person name="Okamura-Oho Y."/>
            <person name="Suzuki H."/>
            <person name="Kawai J."/>
            <person name="Hayashizaki Y."/>
        </authorList>
    </citation>
    <scope>NUCLEOTIDE SEQUENCE [LARGE SCALE MRNA]</scope>
    <source>
        <strain>C57BL/6J</strain>
        <strain>DBA/2J</strain>
        <tissue>Bone marrow</tissue>
    </source>
</reference>
<reference key="2">
    <citation type="journal article" date="2009" name="PLoS Biol.">
        <title>Lineage-specific biology revealed by a finished genome assembly of the mouse.</title>
        <authorList>
            <person name="Church D.M."/>
            <person name="Goodstadt L."/>
            <person name="Hillier L.W."/>
            <person name="Zody M.C."/>
            <person name="Goldstein S."/>
            <person name="She X."/>
            <person name="Bult C.J."/>
            <person name="Agarwala R."/>
            <person name="Cherry J.L."/>
            <person name="DiCuccio M."/>
            <person name="Hlavina W."/>
            <person name="Kapustin Y."/>
            <person name="Meric P."/>
            <person name="Maglott D."/>
            <person name="Birtle Z."/>
            <person name="Marques A.C."/>
            <person name="Graves T."/>
            <person name="Zhou S."/>
            <person name="Teague B."/>
            <person name="Potamousis K."/>
            <person name="Churas C."/>
            <person name="Place M."/>
            <person name="Herschleb J."/>
            <person name="Runnheim R."/>
            <person name="Forrest D."/>
            <person name="Amos-Landgraf J."/>
            <person name="Schwartz D.C."/>
            <person name="Cheng Z."/>
            <person name="Lindblad-Toh K."/>
            <person name="Eichler E.E."/>
            <person name="Ponting C.P."/>
        </authorList>
    </citation>
    <scope>NUCLEOTIDE SEQUENCE [LARGE SCALE GENOMIC DNA]</scope>
    <source>
        <strain>C57BL/6J</strain>
    </source>
</reference>
<reference key="3">
    <citation type="journal article" date="2004" name="Genome Res.">
        <title>The status, quality, and expansion of the NIH full-length cDNA project: the Mammalian Gene Collection (MGC).</title>
        <authorList>
            <consortium name="The MGC Project Team"/>
        </authorList>
    </citation>
    <scope>NUCLEOTIDE SEQUENCE [LARGE SCALE MRNA]</scope>
    <source>
        <strain>C57BL/6J</strain>
        <tissue>Brain</tissue>
    </source>
</reference>
<reference key="4">
    <citation type="journal article" date="2010" name="Cell">
        <title>A tissue-specific atlas of mouse protein phosphorylation and expression.</title>
        <authorList>
            <person name="Huttlin E.L."/>
            <person name="Jedrychowski M.P."/>
            <person name="Elias J.E."/>
            <person name="Goswami T."/>
            <person name="Rad R."/>
            <person name="Beausoleil S.A."/>
            <person name="Villen J."/>
            <person name="Haas W."/>
            <person name="Sowa M.E."/>
            <person name="Gygi S.P."/>
        </authorList>
    </citation>
    <scope>IDENTIFICATION BY MASS SPECTROMETRY [LARGE SCALE ANALYSIS]</scope>
    <source>
        <tissue>Brown adipose tissue</tissue>
        <tissue>Heart</tissue>
    </source>
</reference>
<keyword id="KW-0007">Acetylation</keyword>
<keyword id="KW-0472">Membrane</keyword>
<keyword id="KW-0496">Mitochondrion</keyword>
<keyword id="KW-0999">Mitochondrion inner membrane</keyword>
<keyword id="KW-1185">Reference proteome</keyword>
<keyword id="KW-0812">Transmembrane</keyword>
<keyword id="KW-1133">Transmembrane helix</keyword>
<comment type="function">
    <text evidence="1">Component of the MICOS complex, a large protein complex of the mitochondrial inner membrane that plays crucial roles in the maintenance of crista junctions, inner membrane architecture, and formation of contact sites to the outer membrane.</text>
</comment>
<comment type="subunit">
    <text evidence="1">Component of the mitochondrial contact site and cristae organizing system (MICOS) complex, composed of at least MICOS10/MIC10, CHCHD3/MIC19, CHCHD6/MIC25, APOOL/MIC27, IMMT/MIC60, APOO/MIC23/MIC26 and MICOS13/MIC13 (By similarity). This complex was also known under the names MINOS or MitOS complex (By similarity). The MICOS complex associates with mitochondrial outer membrane proteins SAMM50, MTX1 and MTX2 (together described as components of the mitochondrial outer membrane sorting assembly machinery (SAM) complex) and DNAJC11, mitochondrial inner membrane protein TMEM11 and with HSPA9 (By similarity). The MICOS and SAM complexes together with DNAJC11 are part of a large protein complex spanning both membranes termed the mitochondrial intermembrane space bridging (MIB) complex. Interacts with IMMT/MIC60 and MICOS13/MIC13 (By similarity). Interacts with APOO/MIC23/MIC26 and APOOL/MIC27 (By similarity). Interacts with ARMC1 (By similarity).</text>
</comment>
<comment type="subcellular location">
    <subcellularLocation>
        <location evidence="1">Mitochondrion inner membrane</location>
        <topology evidence="1">Single-pass membrane protein</topology>
    </subcellularLocation>
    <text evidence="1">The C-terminus is located in the intermembrane space, while the location of the N-terminus has not been determined yet. As some programs predict the presence of 2 closely apposed membrane domains, it has been proposed that the protein may cross the membrane twice and that both termini may face the intermembrane space.</text>
</comment>
<comment type="similarity">
    <text evidence="3">Belongs to the MICOS complex subunit Mic10 family.</text>
</comment>
<proteinExistence type="evidence at protein level"/>
<accession>Q7TNS2</accession>
<accession>A2ALL2</accession>
<accession>Q3U6N5</accession>
<dbReference type="EMBL" id="AK152509">
    <property type="protein sequence ID" value="BAE31274.1"/>
    <property type="molecule type" value="mRNA"/>
</dbReference>
<dbReference type="EMBL" id="AK153063">
    <property type="protein sequence ID" value="BAE31689.1"/>
    <property type="molecule type" value="mRNA"/>
</dbReference>
<dbReference type="EMBL" id="AK159100">
    <property type="protein sequence ID" value="BAE34816.1"/>
    <property type="molecule type" value="mRNA"/>
</dbReference>
<dbReference type="EMBL" id="AK167818">
    <property type="protein sequence ID" value="BAE39842.1"/>
    <property type="molecule type" value="mRNA"/>
</dbReference>
<dbReference type="EMBL" id="AL805923">
    <property type="status" value="NOT_ANNOTATED_CDS"/>
    <property type="molecule type" value="Genomic_DNA"/>
</dbReference>
<dbReference type="EMBL" id="AL807811">
    <property type="status" value="NOT_ANNOTATED_CDS"/>
    <property type="molecule type" value="Genomic_DNA"/>
</dbReference>
<dbReference type="EMBL" id="BC055791">
    <property type="protein sequence ID" value="AAH55791.1"/>
    <property type="molecule type" value="mRNA"/>
</dbReference>
<dbReference type="CCDS" id="CCDS51339.1"/>
<dbReference type="RefSeq" id="NP_001156478.1">
    <property type="nucleotide sequence ID" value="NM_001163006.2"/>
</dbReference>
<dbReference type="BioGRID" id="241431">
    <property type="interactions" value="2"/>
</dbReference>
<dbReference type="FunCoup" id="Q7TNS2">
    <property type="interactions" value="877"/>
</dbReference>
<dbReference type="STRING" id="10090.ENSMUSP00000117583"/>
<dbReference type="GlyGen" id="Q7TNS2">
    <property type="glycosylation" value="1 site, 1 O-linked glycan (1 site)"/>
</dbReference>
<dbReference type="iPTMnet" id="Q7TNS2"/>
<dbReference type="PhosphoSitePlus" id="Q7TNS2"/>
<dbReference type="SwissPalm" id="Q7TNS2"/>
<dbReference type="jPOST" id="Q7TNS2"/>
<dbReference type="PaxDb" id="10090-ENSMUSP00000117583"/>
<dbReference type="PeptideAtlas" id="Q7TNS2"/>
<dbReference type="ProteomicsDB" id="252551"/>
<dbReference type="TopDownProteomics" id="Q7TNS2"/>
<dbReference type="Ensembl" id="ENSMUST00000143971.2">
    <property type="protein sequence ID" value="ENSMUSP00000117583.2"/>
    <property type="gene ID" value="ENSMUSG00000050608.12"/>
</dbReference>
<dbReference type="GeneID" id="433771"/>
<dbReference type="KEGG" id="mmu:433771"/>
<dbReference type="UCSC" id="uc008vlu.2">
    <property type="organism name" value="mouse"/>
</dbReference>
<dbReference type="AGR" id="MGI:1913628"/>
<dbReference type="CTD" id="440574"/>
<dbReference type="MGI" id="MGI:1913628">
    <property type="gene designation" value="Micos10"/>
</dbReference>
<dbReference type="VEuPathDB" id="HostDB:ENSMUSG00000050608"/>
<dbReference type="eggNOG" id="KOG4604">
    <property type="taxonomic scope" value="Eukaryota"/>
</dbReference>
<dbReference type="GeneTree" id="ENSGT00390000005732"/>
<dbReference type="HOGENOM" id="CLU_068905_2_1_1"/>
<dbReference type="InParanoid" id="Q7TNS2"/>
<dbReference type="OMA" id="SNCRHDL"/>
<dbReference type="OrthoDB" id="1916310at2759"/>
<dbReference type="PhylomeDB" id="Q7TNS2"/>
<dbReference type="TreeFam" id="TF300259"/>
<dbReference type="BioGRID-ORCS" id="433771">
    <property type="hits" value="8 hits in 77 CRISPR screens"/>
</dbReference>
<dbReference type="ChiTaRS" id="Minos1">
    <property type="organism name" value="mouse"/>
</dbReference>
<dbReference type="PRO" id="PR:Q7TNS2"/>
<dbReference type="Proteomes" id="UP000000589">
    <property type="component" value="Chromosome 4"/>
</dbReference>
<dbReference type="RNAct" id="Q7TNS2">
    <property type="molecule type" value="protein"/>
</dbReference>
<dbReference type="Bgee" id="ENSMUSG00000050608">
    <property type="expression patterns" value="Expressed in floor plate of midbrain and 257 other cell types or tissues"/>
</dbReference>
<dbReference type="GO" id="GO:0061617">
    <property type="term" value="C:MICOS complex"/>
    <property type="evidence" value="ECO:0007669"/>
    <property type="project" value="InterPro"/>
</dbReference>
<dbReference type="GO" id="GO:0005739">
    <property type="term" value="C:mitochondrion"/>
    <property type="evidence" value="ECO:0007005"/>
    <property type="project" value="MGI"/>
</dbReference>
<dbReference type="GO" id="GO:0042407">
    <property type="term" value="P:cristae formation"/>
    <property type="evidence" value="ECO:0007669"/>
    <property type="project" value="Ensembl"/>
</dbReference>
<dbReference type="InterPro" id="IPR007512">
    <property type="entry name" value="Mic10"/>
</dbReference>
<dbReference type="PANTHER" id="PTHR21304">
    <property type="entry name" value="MICOS COMPLEX SUBUNIT MIC10"/>
    <property type="match status" value="1"/>
</dbReference>
<dbReference type="PANTHER" id="PTHR21304:SF0">
    <property type="entry name" value="MICOS COMPLEX SUBUNIT MIC10"/>
    <property type="match status" value="1"/>
</dbReference>
<dbReference type="Pfam" id="PF04418">
    <property type="entry name" value="DUF543"/>
    <property type="match status" value="1"/>
</dbReference>
<evidence type="ECO:0000250" key="1">
    <source>
        <dbReference type="UniProtKB" id="Q5TGZ0"/>
    </source>
</evidence>
<evidence type="ECO:0000255" key="2"/>
<evidence type="ECO:0000305" key="3"/>
<evidence type="ECO:0000312" key="4">
    <source>
        <dbReference type="MGI" id="MGI:1913628"/>
    </source>
</evidence>
<sequence>MSESELGRKWDRCMADTVVKLGTGFGLGIVFSLTFFKRRMWPLAFGSGVGLGMAYSNCQHDFQAPYLLHGKYVKEQ</sequence>
<gene>
    <name type="primary">Micos10</name>
    <name type="synonym">Mic10</name>
    <name evidence="4" type="synonym">Minos1</name>
</gene>